<sequence>MSDSTDISGITVDGRLHSMDSGLTERQRTILNVIRASVTSRGYPPSIREIADAVGLTSTSSVAHQLRTLERKGYLRRDPNRPRAVNVRGVEETQAAGPAVLTEVAGSDVLPEPTFVPILGRIAAGSPIFAEGTVEDIFPLPRELVGEGTLFLLKVTGDSMVEAAICDGDWVVVRQQKVADNGDIVAAMIDGEATVKTFKRAGGQVWLIPHNPAFDPIPGNDATVLGKVVTVIRKI</sequence>
<evidence type="ECO:0000255" key="1">
    <source>
        <dbReference type="HAMAP-Rule" id="MF_00015"/>
    </source>
</evidence>
<comment type="function">
    <text evidence="1">Represses a number of genes involved in the response to DNA damage (SOS response), including recA and lexA. In the presence of single-stranded DNA, RecA interacts with LexA causing an autocatalytic cleavage which disrupts the DNA-binding part of LexA, leading to derepression of the SOS regulon and eventually DNA repair.</text>
</comment>
<comment type="catalytic activity">
    <reaction evidence="1">
        <text>Hydrolysis of Ala-|-Gly bond in repressor LexA.</text>
        <dbReference type="EC" id="3.4.21.88"/>
    </reaction>
</comment>
<comment type="subunit">
    <text evidence="1">Homodimer.</text>
</comment>
<comment type="similarity">
    <text evidence="1">Belongs to the peptidase S24 family.</text>
</comment>
<reference key="1">
    <citation type="journal article" date="2009" name="Nat. Genet.">
        <title>Comparative genomic and phylogeographic analysis of Mycobacterium leprae.</title>
        <authorList>
            <person name="Monot M."/>
            <person name="Honore N."/>
            <person name="Garnier T."/>
            <person name="Zidane N."/>
            <person name="Sherafi D."/>
            <person name="Paniz-Mondolfi A."/>
            <person name="Matsuoka M."/>
            <person name="Taylor G.M."/>
            <person name="Donoghue H.D."/>
            <person name="Bouwman A."/>
            <person name="Mays S."/>
            <person name="Watson C."/>
            <person name="Lockwood D."/>
            <person name="Khamispour A."/>
            <person name="Dowlati Y."/>
            <person name="Jianping S."/>
            <person name="Rea T.H."/>
            <person name="Vera-Cabrera L."/>
            <person name="Stefani M.M."/>
            <person name="Banu S."/>
            <person name="Macdonald M."/>
            <person name="Sapkota B.R."/>
            <person name="Spencer J.S."/>
            <person name="Thomas J."/>
            <person name="Harshman K."/>
            <person name="Singh P."/>
            <person name="Busso P."/>
            <person name="Gattiker A."/>
            <person name="Rougemont J."/>
            <person name="Brennan P.J."/>
            <person name="Cole S.T."/>
        </authorList>
    </citation>
    <scope>NUCLEOTIDE SEQUENCE [LARGE SCALE GENOMIC DNA]</scope>
    <source>
        <strain>Br4923</strain>
    </source>
</reference>
<protein>
    <recommendedName>
        <fullName evidence="1">LexA repressor</fullName>
        <ecNumber evidence="1">3.4.21.88</ecNumber>
    </recommendedName>
</protein>
<organism>
    <name type="scientific">Mycobacterium leprae (strain Br4923)</name>
    <dbReference type="NCBI Taxonomy" id="561304"/>
    <lineage>
        <taxon>Bacteria</taxon>
        <taxon>Bacillati</taxon>
        <taxon>Actinomycetota</taxon>
        <taxon>Actinomycetes</taxon>
        <taxon>Mycobacteriales</taxon>
        <taxon>Mycobacteriaceae</taxon>
        <taxon>Mycobacterium</taxon>
    </lineage>
</organism>
<gene>
    <name evidence="1" type="primary">lexA</name>
    <name type="ordered locus">MLBr01003</name>
</gene>
<feature type="chain" id="PRO_1000192773" description="LexA repressor">
    <location>
        <begin position="1"/>
        <end position="235"/>
    </location>
</feature>
<feature type="DNA-binding region" description="H-T-H motif" evidence="1">
    <location>
        <begin position="47"/>
        <end position="67"/>
    </location>
</feature>
<feature type="active site" description="For autocatalytic cleavage activity" evidence="1">
    <location>
        <position position="159"/>
    </location>
</feature>
<feature type="active site" description="For autocatalytic cleavage activity" evidence="1">
    <location>
        <position position="196"/>
    </location>
</feature>
<feature type="site" description="Cleavage; by autolysis" evidence="1">
    <location>
        <begin position="124"/>
        <end position="125"/>
    </location>
</feature>
<name>LEXA_MYCLB</name>
<keyword id="KW-0068">Autocatalytic cleavage</keyword>
<keyword id="KW-0227">DNA damage</keyword>
<keyword id="KW-0234">DNA repair</keyword>
<keyword id="KW-0235">DNA replication</keyword>
<keyword id="KW-0238">DNA-binding</keyword>
<keyword id="KW-0378">Hydrolase</keyword>
<keyword id="KW-0678">Repressor</keyword>
<keyword id="KW-0742">SOS response</keyword>
<keyword id="KW-0804">Transcription</keyword>
<keyword id="KW-0805">Transcription regulation</keyword>
<accession>B8ZQU5</accession>
<dbReference type="EC" id="3.4.21.88" evidence="1"/>
<dbReference type="EMBL" id="FM211192">
    <property type="protein sequence ID" value="CAR71098.1"/>
    <property type="molecule type" value="Genomic_DNA"/>
</dbReference>
<dbReference type="SMR" id="B8ZQU5"/>
<dbReference type="MEROPS" id="S24.001"/>
<dbReference type="KEGG" id="mlb:MLBr01003"/>
<dbReference type="HOGENOM" id="CLU_066192_45_0_11"/>
<dbReference type="Proteomes" id="UP000006900">
    <property type="component" value="Chromosome"/>
</dbReference>
<dbReference type="GO" id="GO:0003677">
    <property type="term" value="F:DNA binding"/>
    <property type="evidence" value="ECO:0007669"/>
    <property type="project" value="UniProtKB-UniRule"/>
</dbReference>
<dbReference type="GO" id="GO:0004252">
    <property type="term" value="F:serine-type endopeptidase activity"/>
    <property type="evidence" value="ECO:0007669"/>
    <property type="project" value="UniProtKB-UniRule"/>
</dbReference>
<dbReference type="GO" id="GO:0006281">
    <property type="term" value="P:DNA repair"/>
    <property type="evidence" value="ECO:0007669"/>
    <property type="project" value="UniProtKB-UniRule"/>
</dbReference>
<dbReference type="GO" id="GO:0006260">
    <property type="term" value="P:DNA replication"/>
    <property type="evidence" value="ECO:0007669"/>
    <property type="project" value="UniProtKB-UniRule"/>
</dbReference>
<dbReference type="GO" id="GO:0045892">
    <property type="term" value="P:negative regulation of DNA-templated transcription"/>
    <property type="evidence" value="ECO:0007669"/>
    <property type="project" value="UniProtKB-UniRule"/>
</dbReference>
<dbReference type="GO" id="GO:0006508">
    <property type="term" value="P:proteolysis"/>
    <property type="evidence" value="ECO:0007669"/>
    <property type="project" value="InterPro"/>
</dbReference>
<dbReference type="GO" id="GO:0009432">
    <property type="term" value="P:SOS response"/>
    <property type="evidence" value="ECO:0007669"/>
    <property type="project" value="UniProtKB-UniRule"/>
</dbReference>
<dbReference type="CDD" id="cd06529">
    <property type="entry name" value="S24_LexA-like"/>
    <property type="match status" value="1"/>
</dbReference>
<dbReference type="FunFam" id="1.10.10.10:FF:000009">
    <property type="entry name" value="LexA repressor"/>
    <property type="match status" value="1"/>
</dbReference>
<dbReference type="FunFam" id="2.10.109.10:FF:000001">
    <property type="entry name" value="LexA repressor"/>
    <property type="match status" value="1"/>
</dbReference>
<dbReference type="Gene3D" id="2.10.109.10">
    <property type="entry name" value="Umud Fragment, subunit A"/>
    <property type="match status" value="1"/>
</dbReference>
<dbReference type="Gene3D" id="1.10.10.10">
    <property type="entry name" value="Winged helix-like DNA-binding domain superfamily/Winged helix DNA-binding domain"/>
    <property type="match status" value="1"/>
</dbReference>
<dbReference type="HAMAP" id="MF_00015">
    <property type="entry name" value="LexA"/>
    <property type="match status" value="1"/>
</dbReference>
<dbReference type="InterPro" id="IPR006200">
    <property type="entry name" value="LexA"/>
</dbReference>
<dbReference type="InterPro" id="IPR039418">
    <property type="entry name" value="LexA-like"/>
</dbReference>
<dbReference type="InterPro" id="IPR036286">
    <property type="entry name" value="LexA/Signal_pep-like_sf"/>
</dbReference>
<dbReference type="InterPro" id="IPR006199">
    <property type="entry name" value="LexA_DNA-bd_dom"/>
</dbReference>
<dbReference type="InterPro" id="IPR050077">
    <property type="entry name" value="LexA_repressor"/>
</dbReference>
<dbReference type="InterPro" id="IPR006197">
    <property type="entry name" value="Peptidase_S24_LexA"/>
</dbReference>
<dbReference type="InterPro" id="IPR015927">
    <property type="entry name" value="Peptidase_S24_S26A/B/C"/>
</dbReference>
<dbReference type="InterPro" id="IPR036388">
    <property type="entry name" value="WH-like_DNA-bd_sf"/>
</dbReference>
<dbReference type="InterPro" id="IPR036390">
    <property type="entry name" value="WH_DNA-bd_sf"/>
</dbReference>
<dbReference type="NCBIfam" id="TIGR00498">
    <property type="entry name" value="lexA"/>
    <property type="match status" value="1"/>
</dbReference>
<dbReference type="PANTHER" id="PTHR33516">
    <property type="entry name" value="LEXA REPRESSOR"/>
    <property type="match status" value="1"/>
</dbReference>
<dbReference type="PANTHER" id="PTHR33516:SF2">
    <property type="entry name" value="LEXA REPRESSOR-RELATED"/>
    <property type="match status" value="1"/>
</dbReference>
<dbReference type="Pfam" id="PF01726">
    <property type="entry name" value="LexA_DNA_bind"/>
    <property type="match status" value="1"/>
</dbReference>
<dbReference type="Pfam" id="PF00717">
    <property type="entry name" value="Peptidase_S24"/>
    <property type="match status" value="1"/>
</dbReference>
<dbReference type="PRINTS" id="PR00726">
    <property type="entry name" value="LEXASERPTASE"/>
</dbReference>
<dbReference type="SUPFAM" id="SSF51306">
    <property type="entry name" value="LexA/Signal peptidase"/>
    <property type="match status" value="1"/>
</dbReference>
<dbReference type="SUPFAM" id="SSF46785">
    <property type="entry name" value="Winged helix' DNA-binding domain"/>
    <property type="match status" value="1"/>
</dbReference>
<proteinExistence type="inferred from homology"/>